<sequence length="463" mass="53279">MENTLIKSIYRDTPAYLNQELQISGWVRTLRVSKSFGFIEINDGSFFKGIQVVFEEDLNNFEEIAKVATGSSLIIKGLLVESPGAKQPFELKAQSIMIEGACSGDYPLQKKRHSFEYLRTIAHLRPRTNTFAAVFRVRSLVAYAIHKFFQDKGFVYIHTPIITGSDAEGAGEMFRVTTLDLDALPRTEEGRIDYAKDFFGKETNLTVSGQLNAETYCMAFRNVYTFGPTFRAENSNTARHAAEFWMIEPEIAFADLQDDMELAEEMMKYLISYVLEHAPEEMAFFNEFVDKTLFDRLDNIVNSDFGRLTYTEAIEILQKEKERFEFPVEWGADLQTEHERFLTEQIFKKPVFVVDYPKDIKAFYMRLNDDQKTVAAMDLLVPGVGEIIGGSQREERLDYLEKRMAELGLHKEDYSWYLDLRKYGGTRHAGYGLGFERVIMYLTGISNIRDVVAFPRTVKNADF</sequence>
<keyword id="KW-0030">Aminoacyl-tRNA synthetase</keyword>
<keyword id="KW-0067">ATP-binding</keyword>
<keyword id="KW-0963">Cytoplasm</keyword>
<keyword id="KW-0436">Ligase</keyword>
<keyword id="KW-0547">Nucleotide-binding</keyword>
<keyword id="KW-0648">Protein biosynthesis</keyword>
<keyword id="KW-1185">Reference proteome</keyword>
<evidence type="ECO:0000255" key="1">
    <source>
        <dbReference type="HAMAP-Rule" id="MF_00534"/>
    </source>
</evidence>
<proteinExistence type="inferred from homology"/>
<comment type="catalytic activity">
    <reaction evidence="1">
        <text>tRNA(Asn) + L-asparagine + ATP = L-asparaginyl-tRNA(Asn) + AMP + diphosphate + H(+)</text>
        <dbReference type="Rhea" id="RHEA:11180"/>
        <dbReference type="Rhea" id="RHEA-COMP:9659"/>
        <dbReference type="Rhea" id="RHEA-COMP:9674"/>
        <dbReference type="ChEBI" id="CHEBI:15378"/>
        <dbReference type="ChEBI" id="CHEBI:30616"/>
        <dbReference type="ChEBI" id="CHEBI:33019"/>
        <dbReference type="ChEBI" id="CHEBI:58048"/>
        <dbReference type="ChEBI" id="CHEBI:78442"/>
        <dbReference type="ChEBI" id="CHEBI:78515"/>
        <dbReference type="ChEBI" id="CHEBI:456215"/>
        <dbReference type="EC" id="6.1.1.22"/>
    </reaction>
</comment>
<comment type="subunit">
    <text evidence="1">Homodimer.</text>
</comment>
<comment type="subcellular location">
    <subcellularLocation>
        <location evidence="1">Cytoplasm</location>
    </subcellularLocation>
</comment>
<comment type="similarity">
    <text evidence="1">Belongs to the class-II aminoacyl-tRNA synthetase family.</text>
</comment>
<gene>
    <name evidence="1" type="primary">asnS</name>
    <name type="ordered locus">DSY4952</name>
</gene>
<name>SYN_DESHY</name>
<accession>Q24MK1</accession>
<feature type="chain" id="PRO_1000051390" description="Asparagine--tRNA ligase">
    <location>
        <begin position="1"/>
        <end position="463"/>
    </location>
</feature>
<protein>
    <recommendedName>
        <fullName evidence="1">Asparagine--tRNA ligase</fullName>
        <ecNumber evidence="1">6.1.1.22</ecNumber>
    </recommendedName>
    <alternativeName>
        <fullName evidence="1">Asparaginyl-tRNA synthetase</fullName>
        <shortName evidence="1">AsnRS</shortName>
    </alternativeName>
</protein>
<organism>
    <name type="scientific">Desulfitobacterium hafniense (strain Y51)</name>
    <dbReference type="NCBI Taxonomy" id="138119"/>
    <lineage>
        <taxon>Bacteria</taxon>
        <taxon>Bacillati</taxon>
        <taxon>Bacillota</taxon>
        <taxon>Clostridia</taxon>
        <taxon>Eubacteriales</taxon>
        <taxon>Desulfitobacteriaceae</taxon>
        <taxon>Desulfitobacterium</taxon>
    </lineage>
</organism>
<reference key="1">
    <citation type="journal article" date="2006" name="J. Bacteriol.">
        <title>Complete genome sequence of the dehalorespiring bacterium Desulfitobacterium hafniense Y51 and comparison with Dehalococcoides ethenogenes 195.</title>
        <authorList>
            <person name="Nonaka H."/>
            <person name="Keresztes G."/>
            <person name="Shinoda Y."/>
            <person name="Ikenaga Y."/>
            <person name="Abe M."/>
            <person name="Naito K."/>
            <person name="Inatomi K."/>
            <person name="Furukawa K."/>
            <person name="Inui M."/>
            <person name="Yukawa H."/>
        </authorList>
    </citation>
    <scope>NUCLEOTIDE SEQUENCE [LARGE SCALE GENOMIC DNA]</scope>
    <source>
        <strain>Y51</strain>
    </source>
</reference>
<dbReference type="EC" id="6.1.1.22" evidence="1"/>
<dbReference type="EMBL" id="AP008230">
    <property type="protein sequence ID" value="BAE86741.1"/>
    <property type="molecule type" value="Genomic_DNA"/>
</dbReference>
<dbReference type="RefSeq" id="WP_011462263.1">
    <property type="nucleotide sequence ID" value="NC_007907.1"/>
</dbReference>
<dbReference type="SMR" id="Q24MK1"/>
<dbReference type="STRING" id="138119.DSY4952"/>
<dbReference type="KEGG" id="dsy:DSY4952"/>
<dbReference type="eggNOG" id="COG0017">
    <property type="taxonomic scope" value="Bacteria"/>
</dbReference>
<dbReference type="HOGENOM" id="CLU_004553_2_0_9"/>
<dbReference type="Proteomes" id="UP000001946">
    <property type="component" value="Chromosome"/>
</dbReference>
<dbReference type="GO" id="GO:0005737">
    <property type="term" value="C:cytoplasm"/>
    <property type="evidence" value="ECO:0007669"/>
    <property type="project" value="UniProtKB-SubCell"/>
</dbReference>
<dbReference type="GO" id="GO:0004816">
    <property type="term" value="F:asparagine-tRNA ligase activity"/>
    <property type="evidence" value="ECO:0007669"/>
    <property type="project" value="UniProtKB-UniRule"/>
</dbReference>
<dbReference type="GO" id="GO:0005524">
    <property type="term" value="F:ATP binding"/>
    <property type="evidence" value="ECO:0007669"/>
    <property type="project" value="UniProtKB-UniRule"/>
</dbReference>
<dbReference type="GO" id="GO:0140096">
    <property type="term" value="F:catalytic activity, acting on a protein"/>
    <property type="evidence" value="ECO:0007669"/>
    <property type="project" value="UniProtKB-ARBA"/>
</dbReference>
<dbReference type="GO" id="GO:0003676">
    <property type="term" value="F:nucleic acid binding"/>
    <property type="evidence" value="ECO:0007669"/>
    <property type="project" value="InterPro"/>
</dbReference>
<dbReference type="GO" id="GO:0016740">
    <property type="term" value="F:transferase activity"/>
    <property type="evidence" value="ECO:0007669"/>
    <property type="project" value="UniProtKB-ARBA"/>
</dbReference>
<dbReference type="GO" id="GO:0006421">
    <property type="term" value="P:asparaginyl-tRNA aminoacylation"/>
    <property type="evidence" value="ECO:0007669"/>
    <property type="project" value="UniProtKB-UniRule"/>
</dbReference>
<dbReference type="CDD" id="cd00776">
    <property type="entry name" value="AsxRS_core"/>
    <property type="match status" value="1"/>
</dbReference>
<dbReference type="CDD" id="cd04318">
    <property type="entry name" value="EcAsnRS_like_N"/>
    <property type="match status" value="1"/>
</dbReference>
<dbReference type="FunFam" id="3.30.930.10:FF:000016">
    <property type="entry name" value="Asparagine--tRNA ligase"/>
    <property type="match status" value="1"/>
</dbReference>
<dbReference type="Gene3D" id="3.30.930.10">
    <property type="entry name" value="Bira Bifunctional Protein, Domain 2"/>
    <property type="match status" value="1"/>
</dbReference>
<dbReference type="Gene3D" id="2.40.50.140">
    <property type="entry name" value="Nucleic acid-binding proteins"/>
    <property type="match status" value="1"/>
</dbReference>
<dbReference type="HAMAP" id="MF_00534">
    <property type="entry name" value="Asn_tRNA_synth"/>
    <property type="match status" value="1"/>
</dbReference>
<dbReference type="InterPro" id="IPR004364">
    <property type="entry name" value="Aa-tRNA-synt_II"/>
</dbReference>
<dbReference type="InterPro" id="IPR006195">
    <property type="entry name" value="aa-tRNA-synth_II"/>
</dbReference>
<dbReference type="InterPro" id="IPR045864">
    <property type="entry name" value="aa-tRNA-synth_II/BPL/LPL"/>
</dbReference>
<dbReference type="InterPro" id="IPR004522">
    <property type="entry name" value="Asn-tRNA-ligase"/>
</dbReference>
<dbReference type="InterPro" id="IPR002312">
    <property type="entry name" value="Asp/Asn-tRNA-synth_IIb"/>
</dbReference>
<dbReference type="InterPro" id="IPR012340">
    <property type="entry name" value="NA-bd_OB-fold"/>
</dbReference>
<dbReference type="InterPro" id="IPR004365">
    <property type="entry name" value="NA-bd_OB_tRNA"/>
</dbReference>
<dbReference type="NCBIfam" id="TIGR00457">
    <property type="entry name" value="asnS"/>
    <property type="match status" value="1"/>
</dbReference>
<dbReference type="NCBIfam" id="NF003037">
    <property type="entry name" value="PRK03932.1"/>
    <property type="match status" value="1"/>
</dbReference>
<dbReference type="PANTHER" id="PTHR22594:SF34">
    <property type="entry name" value="ASPARAGINE--TRNA LIGASE, MITOCHONDRIAL-RELATED"/>
    <property type="match status" value="1"/>
</dbReference>
<dbReference type="PANTHER" id="PTHR22594">
    <property type="entry name" value="ASPARTYL/LYSYL-TRNA SYNTHETASE"/>
    <property type="match status" value="1"/>
</dbReference>
<dbReference type="Pfam" id="PF00152">
    <property type="entry name" value="tRNA-synt_2"/>
    <property type="match status" value="1"/>
</dbReference>
<dbReference type="Pfam" id="PF01336">
    <property type="entry name" value="tRNA_anti-codon"/>
    <property type="match status" value="1"/>
</dbReference>
<dbReference type="PRINTS" id="PR01042">
    <property type="entry name" value="TRNASYNTHASP"/>
</dbReference>
<dbReference type="SUPFAM" id="SSF55681">
    <property type="entry name" value="Class II aaRS and biotin synthetases"/>
    <property type="match status" value="1"/>
</dbReference>
<dbReference type="SUPFAM" id="SSF50249">
    <property type="entry name" value="Nucleic acid-binding proteins"/>
    <property type="match status" value="1"/>
</dbReference>
<dbReference type="PROSITE" id="PS50862">
    <property type="entry name" value="AA_TRNA_LIGASE_II"/>
    <property type="match status" value="1"/>
</dbReference>